<reference key="1">
    <citation type="journal article" date="1998" name="Biochem. Biophys. Res. Commun.">
        <title>Genomic structure and chromosomal mapping of the mouse STOP gene (Mtap6).</title>
        <authorList>
            <person name="Denarier E."/>
            <person name="Aguezzoul M."/>
            <person name="Jolly C."/>
            <person name="Vourc'h C."/>
            <person name="Roure A."/>
            <person name="Andrieux A."/>
            <person name="Bosc C."/>
            <person name="Job D."/>
        </authorList>
    </citation>
    <scope>NUCLEOTIDE SEQUENCE [GENOMIC DNA]</scope>
    <scope>ALTERNATIVE SPLICING (ISOFORMS 1 AND 2)</scope>
    <source>
        <strain>129/SvJ</strain>
        <tissue>Liver</tissue>
    </source>
</reference>
<reference key="2">
    <citation type="journal article" date="1998" name="Proc. Natl. Acad. Sci. U.S.A.">
        <title>Nonneuronal isoforms of STOP protein are responsible for microtubule cold stability in mammalian fibroblasts.</title>
        <authorList>
            <person name="Denarier E."/>
            <person name="Fourest-Lieuvin A."/>
            <person name="Bosc C."/>
            <person name="Pirollet F."/>
            <person name="Chapel A."/>
            <person name="Margolis R.L."/>
            <person name="Job D."/>
        </authorList>
    </citation>
    <scope>NUCLEOTIDE SEQUENCE [MRNA] (ISOFORM 3)</scope>
    <scope>FUNCTION</scope>
    <scope>SUBCELLULAR LOCATION</scope>
    <source>
        <strain>Swiss Webster / NIH</strain>
        <tissue>Fibroblast</tissue>
    </source>
</reference>
<reference key="3">
    <citation type="journal article" date="2004" name="Genome Res.">
        <title>The status, quality, and expansion of the NIH full-length cDNA project: the Mammalian Gene Collection (MGC).</title>
        <authorList>
            <consortium name="The MGC Project Team"/>
        </authorList>
    </citation>
    <scope>NUCLEOTIDE SEQUENCE [LARGE SCALE MRNA] (ISOFORM 2)</scope>
    <source>
        <strain>C57BL/6J</strain>
        <tissue>Brain</tissue>
    </source>
</reference>
<reference key="4">
    <citation type="journal article" date="2002" name="Genes Dev.">
        <title>The suppression of brain cold-stable microtubules in mice induces synaptic defects associated with neuroleptic-sensitive behavioral disorders.</title>
        <authorList>
            <person name="Andrieux A."/>
            <person name="Salin P.A."/>
            <person name="Vernet M."/>
            <person name="Kujala P."/>
            <person name="Baratier J."/>
            <person name="Gory-Faure S."/>
            <person name="Bosc C."/>
            <person name="Pointu H."/>
            <person name="Proietto D."/>
            <person name="Schweitzer A."/>
            <person name="Denarier E."/>
            <person name="Klumperman J."/>
            <person name="Job D."/>
        </authorList>
    </citation>
    <scope>DISRUPTION PHENOTYPE</scope>
</reference>
<reference key="5">
    <citation type="journal article" date="2003" name="Biochemistry">
        <title>Unusual Ca(2+)-calmodulin binding interactions of the microtubule-associated protein F-STOP.</title>
        <authorList>
            <person name="Bouvier D."/>
            <person name="Vanhaverbeke C."/>
            <person name="Simorre J.P."/>
            <person name="Arlaud G.J."/>
            <person name="Bally I."/>
            <person name="Forge V."/>
            <person name="Margolis R.L."/>
            <person name="Gans P."/>
            <person name="Kleman J.P."/>
        </authorList>
    </citation>
    <scope>INTERACTION WITH CALMODULIN</scope>
</reference>
<reference key="6">
    <citation type="journal article" date="2003" name="Genomics">
        <title>Overlap of promoter and coding sequences in the mouse STOP gene (Mtap6).</title>
        <authorList>
            <person name="Aguezzoul M."/>
            <person name="Andrieux A."/>
            <person name="Denarier E."/>
        </authorList>
    </citation>
    <scope>ALTERNATIVE PROMOTER USAGE</scope>
    <scope>DEVELOPMENTAL STAGE</scope>
    <scope>TISSUE SPECIFICITY</scope>
</reference>
<reference key="7">
    <citation type="journal article" date="2004" name="J. Neurosci. Res.">
        <title>Astrocytes and oligodendrocytes express different STOP protein isoforms.</title>
        <authorList>
            <person name="Galiano M.R."/>
            <person name="Bosc C."/>
            <person name="Schweitzer A."/>
            <person name="Andrieux A."/>
            <person name="Job D."/>
            <person name="Hallak M.E."/>
        </authorList>
    </citation>
    <scope>ALTERNATIVE SPLICING</scope>
    <scope>TISSUE SPECIFICITY</scope>
</reference>
<reference key="8">
    <citation type="journal article" date="2006" name="J. Biol. Chem.">
        <title>STOP-like protein 21 is a novel member of the STOP family, revealing a Golgi localization of STOP proteins.</title>
        <authorList>
            <person name="Gory-Faure S."/>
            <person name="Windscheid V."/>
            <person name="Bosc C."/>
            <person name="Peris L."/>
            <person name="Proietto D."/>
            <person name="Franck R."/>
            <person name="Denarier E."/>
            <person name="Job D."/>
            <person name="Andrieux A."/>
        </authorList>
    </citation>
    <scope>SUBCELLULAR LOCATION</scope>
</reference>
<reference key="9">
    <citation type="journal article" date="2007" name="Mol. Cell. Proteomics">
        <title>Qualitative and quantitative analyses of protein phosphorylation in naive and stimulated mouse synaptosomal preparations.</title>
        <authorList>
            <person name="Munton R.P."/>
            <person name="Tweedie-Cullen R."/>
            <person name="Livingstone-Zatchej M."/>
            <person name="Weinandy F."/>
            <person name="Waidelich M."/>
            <person name="Longo D."/>
            <person name="Gehrig P."/>
            <person name="Potthast F."/>
            <person name="Rutishauser D."/>
            <person name="Gerrits B."/>
            <person name="Panse C."/>
            <person name="Schlapbach R."/>
            <person name="Mansuy I.M."/>
        </authorList>
    </citation>
    <scope>IDENTIFICATION BY MASS SPECTROMETRY [LARGE SCALE ANALYSIS]</scope>
    <source>
        <tissue>Brain cortex</tissue>
    </source>
</reference>
<reference key="10">
    <citation type="journal article" date="2008" name="J. Proteome Res.">
        <title>Large-scale identification and evolution indexing of tyrosine phosphorylation sites from murine brain.</title>
        <authorList>
            <person name="Ballif B.A."/>
            <person name="Carey G.R."/>
            <person name="Sunyaev S.R."/>
            <person name="Gygi S.P."/>
        </authorList>
    </citation>
    <scope>PHOSPHORYLATION [LARGE SCALE ANALYSIS] AT TYR-141</scope>
    <scope>IDENTIFICATION BY MASS SPECTROMETRY [LARGE SCALE ANALYSIS]</scope>
    <source>
        <tissue>Brain</tissue>
    </source>
</reference>
<reference key="11">
    <citation type="journal article" date="2010" name="Cell">
        <title>A tissue-specific atlas of mouse protein phosphorylation and expression.</title>
        <authorList>
            <person name="Huttlin E.L."/>
            <person name="Jedrychowski M.P."/>
            <person name="Elias J.E."/>
            <person name="Goswami T."/>
            <person name="Rad R."/>
            <person name="Beausoleil S.A."/>
            <person name="Villen J."/>
            <person name="Haas W."/>
            <person name="Sowa M.E."/>
            <person name="Gygi S.P."/>
        </authorList>
    </citation>
    <scope>PHOSPHORYLATION [LARGE SCALE ANALYSIS] AT SER-98; SER-207; SER-632; SER-687 AND SER-905</scope>
    <scope>IDENTIFICATION BY MASS SPECTROMETRY [LARGE SCALE ANALYSIS]</scope>
    <source>
        <tissue>Brain</tissue>
        <tissue>Lung</tissue>
    </source>
</reference>
<reference key="12">
    <citation type="journal article" date="2013" name="Mol. Cell">
        <title>SIRT5-mediated lysine desuccinylation impacts diverse metabolic pathways.</title>
        <authorList>
            <person name="Park J."/>
            <person name="Chen Y."/>
            <person name="Tishkoff D.X."/>
            <person name="Peng C."/>
            <person name="Tan M."/>
            <person name="Dai L."/>
            <person name="Xie Z."/>
            <person name="Zhang Y."/>
            <person name="Zwaans B.M."/>
            <person name="Skinner M.E."/>
            <person name="Lombard D.B."/>
            <person name="Zhao Y."/>
        </authorList>
    </citation>
    <scope>IDENTIFICATION BY MASS SPECTROMETRY [LARGE SCALE ANALYSIS]</scope>
    <source>
        <tissue>Embryonic fibroblast</tissue>
    </source>
</reference>
<reference key="13">
    <citation type="journal article" date="2015" name="J. Biol. Chem.">
        <title>Identification of a novel sequence motif recognized by the ankyrin repeat domain of zDHHC17/13 S-acyltransferases.</title>
        <authorList>
            <person name="Lemonidis K."/>
            <person name="Sanchez-Perez M.C."/>
            <person name="Chamberlain L.H."/>
        </authorList>
    </citation>
    <scope>INTERACTION WITH ZDHHC17 AND ZDHHC13</scope>
</reference>
<reference key="14">
    <citation type="journal article" date="2017" name="Neuron">
        <title>Dynamic palmitoylation targets MAP6 to the axon to promote microtubule stabilization during neuronal polarization.</title>
        <authorList>
            <person name="Tortosa E."/>
            <person name="Adolfs Y."/>
            <person name="Fukata M."/>
            <person name="Pasterkamp R.J."/>
            <person name="Kapitein L.C."/>
            <person name="Hoogenraad C.C."/>
        </authorList>
    </citation>
    <scope>FUNCTION</scope>
    <scope>DISRUPTION PHENOTYPE</scope>
</reference>
<protein>
    <recommendedName>
        <fullName>Microtubule-associated protein 6</fullName>
        <shortName>MAP-6</shortName>
    </recommendedName>
    <alternativeName>
        <fullName>Stable tubule-only polypeptide</fullName>
        <shortName>STOP</shortName>
    </alternativeName>
</protein>
<feature type="chain" id="PRO_0000344045" description="Microtubule-associated protein 6">
    <location>
        <begin position="1"/>
        <end position="906"/>
    </location>
</feature>
<feature type="repeat" description="Mc-1" evidence="1">
    <location>
        <begin position="222"/>
        <end position="267"/>
    </location>
</feature>
<feature type="repeat" description="Mc-2" evidence="1">
    <location>
        <begin position="268"/>
        <end position="313"/>
    </location>
</feature>
<feature type="repeat" description="Mc-3" evidence="1">
    <location>
        <begin position="314"/>
        <end position="359"/>
    </location>
</feature>
<feature type="repeat" description="Mc-4" evidence="1">
    <location>
        <begin position="360"/>
        <end position="405"/>
    </location>
</feature>
<feature type="region of interest" description="Calmodulin-binding" evidence="1">
    <location>
        <begin position="1"/>
        <end position="15"/>
    </location>
</feature>
<feature type="region of interest" description="Disordered" evidence="3">
    <location>
        <begin position="37"/>
        <end position="56"/>
    </location>
</feature>
<feature type="region of interest" description="Disordered" evidence="3">
    <location>
        <begin position="65"/>
        <end position="411"/>
    </location>
</feature>
<feature type="region of interest" description="Mn 1" evidence="1">
    <location>
        <begin position="116"/>
        <end position="139"/>
    </location>
</feature>
<feature type="region of interest" description="Calmodulin-binding" evidence="1">
    <location>
        <begin position="124"/>
        <end position="138"/>
    </location>
</feature>
<feature type="region of interest" description="Mn 2" evidence="1">
    <location>
        <begin position="151"/>
        <end position="174"/>
    </location>
</feature>
<feature type="region of interest" description="Calmodulin-binding" evidence="1">
    <location>
        <begin position="160"/>
        <end position="174"/>
    </location>
</feature>
<feature type="region of interest" description="Calmodulin-binding" evidence="1">
    <location>
        <begin position="187"/>
        <end position="201"/>
    </location>
</feature>
<feature type="region of interest" description="4 X approximate tandem repeat Mc" evidence="1">
    <location>
        <begin position="222"/>
        <end position="405"/>
    </location>
</feature>
<feature type="region of interest" description="Calmodulin-binding" evidence="1">
    <location>
        <begin position="235"/>
        <end position="249"/>
    </location>
</feature>
<feature type="region of interest" description="Calmodulin-binding" evidence="1">
    <location>
        <begin position="280"/>
        <end position="294"/>
    </location>
</feature>
<feature type="region of interest" description="Calmodulin-binding" evidence="1">
    <location>
        <begin position="325"/>
        <end position="339"/>
    </location>
</feature>
<feature type="region of interest" description="Calmodulin-binding" evidence="1">
    <location>
        <begin position="375"/>
        <end position="389"/>
    </location>
</feature>
<feature type="region of interest" description="Mn 3" evidence="1">
    <location>
        <begin position="427"/>
        <end position="450"/>
    </location>
</feature>
<feature type="region of interest" description="Calmodulin-binding" evidence="1">
    <location>
        <begin position="435"/>
        <end position="449"/>
    </location>
</feature>
<feature type="region of interest" description="Disordered" evidence="3">
    <location>
        <begin position="441"/>
        <end position="651"/>
    </location>
</feature>
<feature type="region of interest" description="Calmodulin-binding" evidence="1">
    <location>
        <begin position="486"/>
        <end position="500"/>
    </location>
</feature>
<feature type="region of interest" description="Calmodulin-binding" evidence="1">
    <location>
        <begin position="513"/>
        <end position="527"/>
    </location>
</feature>
<feature type="region of interest" description="Disordered" evidence="3">
    <location>
        <begin position="674"/>
        <end position="782"/>
    </location>
</feature>
<feature type="region of interest" description="Disordered" evidence="3">
    <location>
        <begin position="817"/>
        <end position="906"/>
    </location>
</feature>
<feature type="compositionally biased region" description="Pro residues" evidence="3">
    <location>
        <begin position="41"/>
        <end position="50"/>
    </location>
</feature>
<feature type="compositionally biased region" description="Low complexity" evidence="3">
    <location>
        <begin position="93"/>
        <end position="117"/>
    </location>
</feature>
<feature type="compositionally biased region" description="Basic and acidic residues" evidence="3">
    <location>
        <begin position="119"/>
        <end position="139"/>
    </location>
</feature>
<feature type="compositionally biased region" description="Basic and acidic residues" evidence="3">
    <location>
        <begin position="147"/>
        <end position="171"/>
    </location>
</feature>
<feature type="compositionally biased region" description="Basic and acidic residues" evidence="3">
    <location>
        <begin position="496"/>
        <end position="505"/>
    </location>
</feature>
<feature type="compositionally biased region" description="Basic residues" evidence="3">
    <location>
        <begin position="512"/>
        <end position="527"/>
    </location>
</feature>
<feature type="compositionally biased region" description="Basic and acidic residues" evidence="3">
    <location>
        <begin position="549"/>
        <end position="573"/>
    </location>
</feature>
<feature type="compositionally biased region" description="Polar residues" evidence="3">
    <location>
        <begin position="695"/>
        <end position="711"/>
    </location>
</feature>
<feature type="compositionally biased region" description="Basic and acidic residues" evidence="3">
    <location>
        <begin position="715"/>
        <end position="742"/>
    </location>
</feature>
<feature type="modified residue" description="Phosphoserine" evidence="16">
    <location>
        <position position="98"/>
    </location>
</feature>
<feature type="modified residue" description="Phosphotyrosine" evidence="15">
    <location>
        <position position="141"/>
    </location>
</feature>
<feature type="modified residue" description="Phosphoserine" evidence="1">
    <location>
        <position position="185"/>
    </location>
</feature>
<feature type="modified residue" description="Phosphoserine" evidence="16">
    <location>
        <position position="207"/>
    </location>
</feature>
<feature type="modified residue" description="Phosphoserine" evidence="16">
    <location>
        <position position="632"/>
    </location>
</feature>
<feature type="modified residue" description="Phosphoserine" evidence="16">
    <location>
        <position position="687"/>
    </location>
</feature>
<feature type="modified residue" description="Phosphoserine" evidence="16">
    <location>
        <position position="905"/>
    </location>
</feature>
<feature type="lipid moiety-binding region" description="S-palmitoyl cysteine" evidence="1">
    <location>
        <position position="5"/>
    </location>
</feature>
<feature type="lipid moiety-binding region" description="S-palmitoyl cysteine" evidence="1">
    <location>
        <position position="10"/>
    </location>
</feature>
<feature type="lipid moiety-binding region" description="S-palmitoyl cysteine" evidence="1">
    <location>
        <position position="11"/>
    </location>
</feature>
<feature type="splice variant" id="VSP_034724" description="In isoform 3." evidence="13">
    <location>
        <begin position="1"/>
        <end position="203"/>
    </location>
</feature>
<feature type="splice variant" id="VSP_034725" description="In isoform 3." evidence="13">
    <original>VEKPSVQ</original>
    <variation>EPGQTHQ</variation>
    <location>
        <begin position="503"/>
        <end position="509"/>
    </location>
</feature>
<feature type="splice variant" id="VSP_034726" description="In isoform 3." evidence="13">
    <location>
        <begin position="510"/>
        <end position="906"/>
    </location>
</feature>
<feature type="splice variant" id="VSP_034727" description="In isoform 2." evidence="12">
    <location>
        <begin position="569"/>
        <end position="906"/>
    </location>
</feature>
<feature type="sequence conflict" description="In Ref. 1; CAA75049." evidence="14" ref="1">
    <original>P</original>
    <variation>L</variation>
    <location>
        <position position="81"/>
    </location>
</feature>
<feature type="sequence conflict" description="In Ref. 1; CAA75930." evidence="14" ref="1">
    <original>V</original>
    <variation>G</variation>
    <location>
        <position position="87"/>
    </location>
</feature>
<feature type="sequence conflict" description="In Ref. 1; CAA75930 and 2; CAA75989." evidence="14" ref="1 2">
    <original>E</original>
    <variation>K</variation>
    <location>
        <position position="344"/>
    </location>
</feature>
<feature type="sequence conflict" description="In Ref. 1; CAA75049." evidence="14" ref="1">
    <original>G</original>
    <variation>S</variation>
    <location>
        <position position="405"/>
    </location>
</feature>
<feature type="sequence conflict" description="In Ref. 1; CAA75930." evidence="14" ref="1">
    <original>MVP</original>
    <variation>VVH</variation>
    <location>
        <begin position="755"/>
        <end position="757"/>
    </location>
</feature>
<feature type="sequence conflict" description="In Ref. 1; CAA75049." evidence="14" ref="1">
    <original>M</original>
    <variation>V</variation>
    <location>
        <position position="755"/>
    </location>
</feature>
<feature type="sequence conflict" description="In Ref. 1; CAA75930." evidence="14" ref="1">
    <original>P</original>
    <variation>S</variation>
    <location>
        <position position="825"/>
    </location>
</feature>
<proteinExistence type="evidence at protein level"/>
<gene>
    <name type="primary">Map6</name>
    <name type="synonym">Mtap6</name>
</gene>
<name>MAP6_MOUSE</name>
<dbReference type="EMBL" id="Y14754">
    <property type="protein sequence ID" value="CAA75049.1"/>
    <property type="molecule type" value="Genomic_DNA"/>
</dbReference>
<dbReference type="EMBL" id="Y14755">
    <property type="protein sequence ID" value="CAA75049.1"/>
    <property type="status" value="JOINED"/>
    <property type="molecule type" value="Genomic_DNA"/>
</dbReference>
<dbReference type="EMBL" id="Y14756">
    <property type="protein sequence ID" value="CAA75049.1"/>
    <property type="status" value="JOINED"/>
    <property type="molecule type" value="Genomic_DNA"/>
</dbReference>
<dbReference type="EMBL" id="Y16008">
    <property type="protein sequence ID" value="CAA75930.1"/>
    <property type="molecule type" value="Genomic_DNA"/>
</dbReference>
<dbReference type="EMBL" id="Y16032">
    <property type="protein sequence ID" value="CAA75989.1"/>
    <property type="molecule type" value="mRNA"/>
</dbReference>
<dbReference type="EMBL" id="BC053039">
    <property type="protein sequence ID" value="AAH53039.1"/>
    <property type="molecule type" value="mRNA"/>
</dbReference>
<dbReference type="CCDS" id="CCDS21479.1">
    <molecule id="Q7TSJ2-1"/>
</dbReference>
<dbReference type="CCDS" id="CCDS40029.1">
    <molecule id="Q7TSJ2-3"/>
</dbReference>
<dbReference type="CCDS" id="CCDS85345.1">
    <molecule id="Q7TSJ2-2"/>
</dbReference>
<dbReference type="PIR" id="JC5963">
    <property type="entry name" value="JC5963"/>
</dbReference>
<dbReference type="RefSeq" id="NP_001036820.2">
    <molecule id="Q7TSJ2-3"/>
    <property type="nucleotide sequence ID" value="NM_001043355.2"/>
</dbReference>
<dbReference type="RefSeq" id="NP_001041632.1">
    <molecule id="Q7TSJ2-2"/>
    <property type="nucleotide sequence ID" value="NM_001048167.1"/>
</dbReference>
<dbReference type="RefSeq" id="NP_034967.2">
    <molecule id="Q7TSJ2-1"/>
    <property type="nucleotide sequence ID" value="NM_010837.3"/>
</dbReference>
<dbReference type="BioGRID" id="201587">
    <property type="interactions" value="23"/>
</dbReference>
<dbReference type="FunCoup" id="Q7TSJ2">
    <property type="interactions" value="770"/>
</dbReference>
<dbReference type="IntAct" id="Q7TSJ2">
    <property type="interactions" value="6"/>
</dbReference>
<dbReference type="MINT" id="Q7TSJ2"/>
<dbReference type="STRING" id="10090.ENSMUSP00000146585"/>
<dbReference type="GlyGen" id="Q7TSJ2">
    <property type="glycosylation" value="16 sites, 1 O-linked glycan (14 sites)"/>
</dbReference>
<dbReference type="iPTMnet" id="Q7TSJ2"/>
<dbReference type="PhosphoSitePlus" id="Q7TSJ2"/>
<dbReference type="SwissPalm" id="Q7TSJ2"/>
<dbReference type="PaxDb" id="10090-ENSMUSP00000064787"/>
<dbReference type="PeptideAtlas" id="Q7TSJ2"/>
<dbReference type="ProteomicsDB" id="295817">
    <molecule id="Q7TSJ2-1"/>
</dbReference>
<dbReference type="ProteomicsDB" id="295818">
    <molecule id="Q7TSJ2-2"/>
</dbReference>
<dbReference type="ProteomicsDB" id="295819">
    <molecule id="Q7TSJ2-3"/>
</dbReference>
<dbReference type="Pumba" id="Q7TSJ2"/>
<dbReference type="Antibodypedia" id="17382">
    <property type="antibodies" value="58 antibodies from 17 providers"/>
</dbReference>
<dbReference type="DNASU" id="17760"/>
<dbReference type="Ensembl" id="ENSMUST00000068973.11">
    <molecule id="Q7TSJ2-1"/>
    <property type="protein sequence ID" value="ENSMUSP00000064787.5"/>
    <property type="gene ID" value="ENSMUSG00000055407.15"/>
</dbReference>
<dbReference type="Ensembl" id="ENSMUST00000107100.3">
    <molecule id="Q7TSJ2-3"/>
    <property type="protein sequence ID" value="ENSMUSP00000102717.3"/>
    <property type="gene ID" value="ENSMUSG00000055407.15"/>
</dbReference>
<dbReference type="Ensembl" id="ENSMUST00000127492.2">
    <molecule id="Q7TSJ2-2"/>
    <property type="protein sequence ID" value="ENSMUSP00000146340.2"/>
    <property type="gene ID" value="ENSMUSG00000055407.15"/>
</dbReference>
<dbReference type="Ensembl" id="ENSMUST00000207883.2">
    <molecule id="Q7TSJ2-1"/>
    <property type="protein sequence ID" value="ENSMUSP00000146585.2"/>
    <property type="gene ID" value="ENSMUSG00000055407.15"/>
</dbReference>
<dbReference type="Ensembl" id="ENSMUST00000208605.2">
    <molecule id="Q7TSJ2-3"/>
    <property type="protein sequence ID" value="ENSMUSP00000146897.2"/>
    <property type="gene ID" value="ENSMUSG00000055407.15"/>
</dbReference>
<dbReference type="GeneID" id="17760"/>
<dbReference type="KEGG" id="mmu:17760"/>
<dbReference type="UCSC" id="uc009ilg.1">
    <molecule id="Q7TSJ2-1"/>
    <property type="organism name" value="mouse"/>
</dbReference>
<dbReference type="UCSC" id="uc009ili.1">
    <molecule id="Q7TSJ2-3"/>
    <property type="organism name" value="mouse"/>
</dbReference>
<dbReference type="AGR" id="MGI:1201690"/>
<dbReference type="CTD" id="4135"/>
<dbReference type="MGI" id="MGI:1201690">
    <property type="gene designation" value="Map6"/>
</dbReference>
<dbReference type="VEuPathDB" id="HostDB:ENSMUSG00000055407"/>
<dbReference type="eggNOG" id="ENOG502QS1F">
    <property type="taxonomic scope" value="Eukaryota"/>
</dbReference>
<dbReference type="GeneTree" id="ENSGT00530000063947"/>
<dbReference type="HOGENOM" id="CLU_018049_1_0_1"/>
<dbReference type="InParanoid" id="Q7TSJ2"/>
<dbReference type="OMA" id="KKPGPAW"/>
<dbReference type="OrthoDB" id="9632339at2759"/>
<dbReference type="PhylomeDB" id="Q7TSJ2"/>
<dbReference type="TreeFam" id="TF338320"/>
<dbReference type="BioGRID-ORCS" id="17760">
    <property type="hits" value="3 hits in 76 CRISPR screens"/>
</dbReference>
<dbReference type="CD-CODE" id="CE726F99">
    <property type="entry name" value="Postsynaptic density"/>
</dbReference>
<dbReference type="ChiTaRS" id="Map6">
    <property type="organism name" value="mouse"/>
</dbReference>
<dbReference type="PRO" id="PR:Q7TSJ2"/>
<dbReference type="Proteomes" id="UP000000589">
    <property type="component" value="Chromosome 7"/>
</dbReference>
<dbReference type="RNAct" id="Q7TSJ2">
    <property type="molecule type" value="protein"/>
</dbReference>
<dbReference type="Bgee" id="ENSMUSG00000055407">
    <property type="expression patterns" value="Expressed in embryonic brain and 194 other cell types or tissues"/>
</dbReference>
<dbReference type="ExpressionAtlas" id="Q7TSJ2">
    <property type="expression patterns" value="baseline and differential"/>
</dbReference>
<dbReference type="GO" id="GO:0030424">
    <property type="term" value="C:axon"/>
    <property type="evidence" value="ECO:0007669"/>
    <property type="project" value="UniProtKB-SubCell"/>
</dbReference>
<dbReference type="GO" id="GO:0030425">
    <property type="term" value="C:dendrite"/>
    <property type="evidence" value="ECO:0007669"/>
    <property type="project" value="UniProtKB-SubCell"/>
</dbReference>
<dbReference type="GO" id="GO:0005794">
    <property type="term" value="C:Golgi apparatus"/>
    <property type="evidence" value="ECO:0007669"/>
    <property type="project" value="UniProtKB-SubCell"/>
</dbReference>
<dbReference type="GO" id="GO:0005874">
    <property type="term" value="C:microtubule"/>
    <property type="evidence" value="ECO:0007669"/>
    <property type="project" value="UniProtKB-KW"/>
</dbReference>
<dbReference type="GO" id="GO:0048471">
    <property type="term" value="C:perinuclear region of cytoplasm"/>
    <property type="evidence" value="ECO:0007669"/>
    <property type="project" value="Ensembl"/>
</dbReference>
<dbReference type="GO" id="GO:0030658">
    <property type="term" value="C:transport vesicle membrane"/>
    <property type="evidence" value="ECO:0007669"/>
    <property type="project" value="UniProtKB-SubCell"/>
</dbReference>
<dbReference type="GO" id="GO:0005516">
    <property type="term" value="F:calmodulin binding"/>
    <property type="evidence" value="ECO:0007669"/>
    <property type="project" value="UniProtKB-KW"/>
</dbReference>
<dbReference type="GO" id="GO:0008017">
    <property type="term" value="F:microtubule binding"/>
    <property type="evidence" value="ECO:0000314"/>
    <property type="project" value="MGI"/>
</dbReference>
<dbReference type="GO" id="GO:0048813">
    <property type="term" value="P:dendrite morphogenesis"/>
    <property type="evidence" value="ECO:0000250"/>
    <property type="project" value="UniProtKB"/>
</dbReference>
<dbReference type="GO" id="GO:0032418">
    <property type="term" value="P:lysosome localization"/>
    <property type="evidence" value="ECO:0000250"/>
    <property type="project" value="UniProtKB"/>
</dbReference>
<dbReference type="GO" id="GO:0000226">
    <property type="term" value="P:microtubule cytoskeleton organization"/>
    <property type="evidence" value="ECO:0007669"/>
    <property type="project" value="InterPro"/>
</dbReference>
<dbReference type="InterPro" id="IPR007882">
    <property type="entry name" value="MAP6"/>
</dbReference>
<dbReference type="PANTHER" id="PTHR14759:SF29">
    <property type="entry name" value="MICROTUBULE-ASSOCIATED PROTEIN 6"/>
    <property type="match status" value="1"/>
</dbReference>
<dbReference type="PANTHER" id="PTHR14759">
    <property type="entry name" value="STOP PROTEIN"/>
    <property type="match status" value="1"/>
</dbReference>
<comment type="function">
    <text evidence="1 2 10 11">Involved in microtubule stabilization in many cell types, including neuronal cells (PubMed:9600916). Specifically has microtubule cold stabilizing activity (PubMed:9600916). Involved in dendrite morphogenesis and maintenance by regulating lysosomal trafficking via its interaction with TMEM106B (By similarity). Regulates KIF5A-mediated axonal cargo transport (By similarity). Regulates axonal growth during neuron polarization (PubMed:28521134).</text>
</comment>
<comment type="subunit">
    <text evidence="2 6 9">Interacts with calmodulin (via C-terminus); the interaction is dependent on Ca(2+) (PubMed:14516200). Interacts (via C-terminus) with TMEM106B (via N-terminus) (By similarity). Interacts with ZDHHC13 (via ANK repeats) (PubMed:26198635). Interacts with ZDHHC17 (via ANK repeats) (PubMed:26198635).</text>
</comment>
<comment type="subcellular location">
    <subcellularLocation>
        <location evidence="11">Cytoplasm</location>
        <location evidence="11">Cytoskeleton</location>
    </subcellularLocation>
    <subcellularLocation>
        <location evidence="8">Golgi apparatus</location>
    </subcellularLocation>
    <subcellularLocation>
        <location evidence="1">Cell projection</location>
        <location evidence="1">Axon</location>
    </subcellularLocation>
    <subcellularLocation>
        <location evidence="1">Cell projection</location>
        <location evidence="1">Dendrite</location>
    </subcellularLocation>
    <subcellularLocation>
        <location evidence="1">Cytoplasmic vesicle</location>
        <location evidence="1">Secretory vesicle membrane</location>
        <topology evidence="1">Lipid-anchor</topology>
        <orientation evidence="1">Cytoplasmic side</orientation>
    </subcellularLocation>
    <text evidence="1 8 11">Isoform 1 and isoform 2 associate with axonal microtubules in neurons (PubMed:16837464). Isoform 3 associates with microtubules in fibroblasts (PubMed:9600916). Localizes predominantly in the proximal part of the axon (By similarity). Preferentially is concentrated on a portion of the microtubule polymer in which tubulin is modified by detyrosination and acetylation and is also resistant to depolymerization induced by both nocodazole and cold (By similarity). In unpolarized neurons, localizes to the Golgi and to secretory vesicles accumulating transiently at the tips of a subset of neurites (By similarity). Following neuronal polarization and during axon outgrowth, accumulates in the axonal growth cone and subsequently localizes throughout the axon. Partially localizes to dendrites in mature neurons (By similarity).</text>
</comment>
<comment type="alternative products">
    <event type="alternative promoter"/>
    <event type="alternative splicing"/>
    <isoform>
        <id>Q7TSJ2-1</id>
        <name>1</name>
        <name>N-STOP</name>
        <name>Neuronal STOP</name>
        <sequence type="displayed"/>
    </isoform>
    <isoform>
        <id>Q7TSJ2-2</id>
        <name>2</name>
        <name>E-STOP</name>
        <name>Early STOP</name>
        <sequence type="described" ref="VSP_034727"/>
    </isoform>
    <isoform>
        <id>Q7TSJ2-3</id>
        <name>3</name>
        <name>F-STOP</name>
        <name>Fibroblastic STOP</name>
        <sequence type="described" ref="VSP_034724 VSP_034725 VSP_034726"/>
    </isoform>
    <text>Comment: Additional isoforms seem to exist.</text>
</comment>
<comment type="tissue specificity">
    <text evidence="5 7">Isoform 1 is specifically expressed in adult brain. Isoform 2 is predominantly expressed in embryonic brain; expression persists at low levels in the adult brain. Isoform 3 is expressed at high levels in lung and at lower levels in testis, heart, muscle and kidney (at protein level). Oligodendrocytes express a major isoform of 89 kDa (O-STOP). Astrocytes also express an isoform of 60 kDa (A-STOP).</text>
</comment>
<comment type="developmental stage">
    <text evidence="5">Isoform 2 is expressed in embryonic brain.</text>
</comment>
<comment type="PTM">
    <text evidence="1">Palmitoylated. Probably depalmitoylated by ABHD17A, ABHD17B and ABHD17C. During neuronal polarization, palmitoylation and depalmitoylation cycles regulate MAP6 shuttling between secretory vesicles and microtubules, and its polarized distribution in the axon.</text>
</comment>
<comment type="disruption phenotype">
    <text evidence="4 10">Mice are devoid of cold-stable microtubules and show no detectable defects in brain anatomy but show synaptic defects, with depleted synaptic vesicle pools and impaired synaptic plasticity, associated with severe behavioral disorders, including a disorganized activity with disruption of normal behavioral sequences and episodes of hyperlocomotion or apparent prostration, anxiety, severe social withdrawal and complete nurturing defects (PubMed:12231625). The behavioral defects are alleviated by long-term treatment with neuroleptics (PubMed:12231625). RNAi-mediated knockdown in brain at the 14.5 dpc stage disrupts proper neuron migration resulting in their accumulation in the ventricular and subventricular zones (PubMed:28521134).</text>
</comment>
<comment type="miscellaneous">
    <molecule>Isoform 1</molecule>
    <text>Produced by alternative promoter usage.</text>
</comment>
<comment type="miscellaneous">
    <molecule>Isoform 2</molecule>
    <text evidence="14">Produced by alternative splicing of isoform 1.</text>
</comment>
<comment type="miscellaneous">
    <molecule>Isoform 3</molecule>
    <text evidence="14">Produced by alternative promoter usage.</text>
</comment>
<comment type="similarity">
    <text evidence="14">Belongs to the STOP family.</text>
</comment>
<sequence>MAWPCITRACCIARFWNQLDKADIAVPLVFTKYSEATEHPGAPPQPPAPLQPALAPPSRAVAIETQPAQGESDAVARATGPAPGPSVDRETVAAPGRSGLGLGAASASTSGSGPADSVMRQDYRAWKVQRPEPSCRPRSEYQPSDAPFERETQYQKDFRAWPLPRRGDHPWIPKPVQIPATSQPSQPVLGVPKRRPQSQERGPMQLSADARDPEGAGGAGVLAAGKASGVDQRDTRRKAGPAWMVTRNEGHEEKPLPPAQSQTQEGGPAAGKASGADQRDTRRKAGPAWMVTRSEGHEEKPLPPAQSQTQEGGPAAGKASGADQRDTRRKAGPAWMVTRTEGHEETPLPPAQSQTQEGGPAAGKASGADERDTRRKAGPAWMVRRSEGHEQTPAAHAQGTGPEGGKGRAVADALNRQIREEVASTVSSSYRNEFRAWTDIKPVKPIKAKPQYKPPDDKMVHETSYSAQFKGEANKPSAADNKAMDRRRIRSLYSEPFKECPKVEKPSVQSSKPKKTSTSHKPPRKAKDKQVVSGQAAKKKTTEGPSATKPDDKEQSKEMNNKLAEAKESRVKPTSDASKNRGPVTKEPHKDQGSVAPGLPKGQEPLKDQGPVVPGLPKDQVPVVPGSLKGQSPTAPGPTKDQGAVLLGPVKDLGPVAPAPIKVQDHIASELLKNKDSVPLAPAKAQSPLLPEPLKNQSPVVPASTKDQSFPTPAPRKDPGPVIPEPEKDRAPTVPERRKDQHVSIMASLKNEAPMVPESVKNQGLAGPELVKDTGTDTTAPRYLKGHDSVFVAPVKNQGPVIPEPVKSQDPIIPALAKDQGPMLPEPPKNQSPVVLGPIKNQDPIIPVPLKGQDPLVPAPTKDQGPTAPDPLKTQGPKGTQLPTVSPSPPVMIPTVPHTEYIEGSP</sequence>
<accession>Q7TSJ2</accession>
<accession>O55129</accession>
<accession>O70586</accession>
<accession>O70587</accession>
<accession>Q78DV4</accession>
<accession>Q78DV5</accession>
<organism>
    <name type="scientific">Mus musculus</name>
    <name type="common">Mouse</name>
    <dbReference type="NCBI Taxonomy" id="10090"/>
    <lineage>
        <taxon>Eukaryota</taxon>
        <taxon>Metazoa</taxon>
        <taxon>Chordata</taxon>
        <taxon>Craniata</taxon>
        <taxon>Vertebrata</taxon>
        <taxon>Euteleostomi</taxon>
        <taxon>Mammalia</taxon>
        <taxon>Eutheria</taxon>
        <taxon>Euarchontoglires</taxon>
        <taxon>Glires</taxon>
        <taxon>Rodentia</taxon>
        <taxon>Myomorpha</taxon>
        <taxon>Muroidea</taxon>
        <taxon>Muridae</taxon>
        <taxon>Murinae</taxon>
        <taxon>Mus</taxon>
        <taxon>Mus</taxon>
    </lineage>
</organism>
<evidence type="ECO:0000250" key="1">
    <source>
        <dbReference type="UniProtKB" id="Q63560"/>
    </source>
</evidence>
<evidence type="ECO:0000250" key="2">
    <source>
        <dbReference type="UniProtKB" id="Q96JE9"/>
    </source>
</evidence>
<evidence type="ECO:0000256" key="3">
    <source>
        <dbReference type="SAM" id="MobiDB-lite"/>
    </source>
</evidence>
<evidence type="ECO:0000269" key="4">
    <source>
    </source>
</evidence>
<evidence type="ECO:0000269" key="5">
    <source>
    </source>
</evidence>
<evidence type="ECO:0000269" key="6">
    <source>
    </source>
</evidence>
<evidence type="ECO:0000269" key="7">
    <source>
    </source>
</evidence>
<evidence type="ECO:0000269" key="8">
    <source>
    </source>
</evidence>
<evidence type="ECO:0000269" key="9">
    <source>
    </source>
</evidence>
<evidence type="ECO:0000269" key="10">
    <source>
    </source>
</evidence>
<evidence type="ECO:0000269" key="11">
    <source>
    </source>
</evidence>
<evidence type="ECO:0000303" key="12">
    <source>
    </source>
</evidence>
<evidence type="ECO:0000303" key="13">
    <source>
    </source>
</evidence>
<evidence type="ECO:0000305" key="14"/>
<evidence type="ECO:0007744" key="15">
    <source>
    </source>
</evidence>
<evidence type="ECO:0007744" key="16">
    <source>
    </source>
</evidence>
<keyword id="KW-0877">Alternative promoter usage</keyword>
<keyword id="KW-0025">Alternative splicing</keyword>
<keyword id="KW-0112">Calmodulin-binding</keyword>
<keyword id="KW-0966">Cell projection</keyword>
<keyword id="KW-0963">Cytoplasm</keyword>
<keyword id="KW-0968">Cytoplasmic vesicle</keyword>
<keyword id="KW-0206">Cytoskeleton</keyword>
<keyword id="KW-0333">Golgi apparatus</keyword>
<keyword id="KW-0449">Lipoprotein</keyword>
<keyword id="KW-0472">Membrane</keyword>
<keyword id="KW-0493">Microtubule</keyword>
<keyword id="KW-0564">Palmitate</keyword>
<keyword id="KW-0597">Phosphoprotein</keyword>
<keyword id="KW-1185">Reference proteome</keyword>
<keyword id="KW-0677">Repeat</keyword>
<keyword id="KW-0813">Transport</keyword>